<feature type="peptide" id="PRO_0000402823" description="Tachykinin-like peptide-XIII" evidence="2">
    <location>
        <begin position="1"/>
        <end position="13"/>
    </location>
</feature>
<feature type="modified residue" description="Pyrrolidone carboxylic acid" evidence="2">
    <location>
        <position position="1"/>
    </location>
</feature>
<feature type="modified residue" description="Methionine amide" evidence="2">
    <location>
        <position position="13"/>
    </location>
</feature>
<reference evidence="4" key="1">
    <citation type="journal article" date="2005" name="Rapid Commun. Mass Spectrom.">
        <title>Electrospray ionization quadrupole time-of-flight and matrix-assisted laser desorption/ionization tandem time-of-flight mass spectrometric analyses to solve micro-heterogeneity in post-translationally modified peptides from Phoneutria nigriventer (Aranea, Ctenidae) venom.</title>
        <authorList>
            <person name="Pimenta A.M.C."/>
            <person name="Rates B."/>
            <person name="Bloch C. Jr."/>
            <person name="Gomes P.C."/>
            <person name="Santoro M.M."/>
            <person name="de Lima M.E."/>
            <person name="Richardson M."/>
            <person name="Cordeiro M.N."/>
        </authorList>
    </citation>
    <scope>PROTEIN SEQUENCE</scope>
    <scope>SUBCELLULAR LOCATION</scope>
    <scope>TISSUE SPECIFICITY</scope>
    <scope>MASS SPECTROMETRY</scope>
    <scope>PYROGLUTAMATE FORMATION AT GLN-1</scope>
    <scope>AMIDATION AT MET-13</scope>
    <source>
        <tissue evidence="2">Venom</tissue>
    </source>
</reference>
<dbReference type="GO" id="GO:0005576">
    <property type="term" value="C:extracellular region"/>
    <property type="evidence" value="ECO:0000314"/>
    <property type="project" value="UniProtKB"/>
</dbReference>
<dbReference type="InterPro" id="IPR013055">
    <property type="entry name" value="Tachy_Neuro_lke_CS"/>
</dbReference>
<dbReference type="PROSITE" id="PS00267">
    <property type="entry name" value="TACHYKININ"/>
    <property type="match status" value="1"/>
</dbReference>
<organism>
    <name type="scientific">Phoneutria nigriventer</name>
    <name type="common">Brazilian armed spider</name>
    <name type="synonym">Ctenus nigriventer</name>
    <dbReference type="NCBI Taxonomy" id="6918"/>
    <lineage>
        <taxon>Eukaryota</taxon>
        <taxon>Metazoa</taxon>
        <taxon>Ecdysozoa</taxon>
        <taxon>Arthropoda</taxon>
        <taxon>Chelicerata</taxon>
        <taxon>Arachnida</taxon>
        <taxon>Araneae</taxon>
        <taxon>Araneomorphae</taxon>
        <taxon>Entelegynae</taxon>
        <taxon>Lycosoidea</taxon>
        <taxon>Ctenidae</taxon>
        <taxon>Phoneutria</taxon>
    </lineage>
</organism>
<name>TLP13_PHONI</name>
<sequence>QKKDKKDRFYGLM</sequence>
<comment type="subcellular location">
    <subcellularLocation>
        <location evidence="2">Secreted</location>
    </subcellularLocation>
</comment>
<comment type="tissue specificity">
    <text evidence="2">Expressed by the venom gland.</text>
</comment>
<comment type="mass spectrometry"/>
<comment type="similarity">
    <text evidence="1">Belongs to the tachykinin family.</text>
</comment>
<protein>
    <recommendedName>
        <fullName evidence="5">Tachykinin-like peptide-XIII</fullName>
    </recommendedName>
    <alternativeName>
        <fullName evidence="3">P.nigriventer tachykinin peptides XIII</fullName>
        <shortName evidence="3">PnTkP-XIII</shortName>
    </alternativeName>
    <alternativeName>
        <fullName evidence="4">U29-ctenitoxin-Pn1m</fullName>
        <shortName evidence="4">U29-CNTX-Pn1m</shortName>
    </alternativeName>
</protein>
<proteinExistence type="evidence at protein level"/>
<keyword id="KW-0027">Amidation</keyword>
<keyword id="KW-0903">Direct protein sequencing</keyword>
<keyword id="KW-0873">Pyrrolidone carboxylic acid</keyword>
<keyword id="KW-0964">Secreted</keyword>
<accession>P86310</accession>
<evidence type="ECO:0000255" key="1"/>
<evidence type="ECO:0000269" key="2">
    <source>
    </source>
</evidence>
<evidence type="ECO:0000303" key="3">
    <source>
    </source>
</evidence>
<evidence type="ECO:0000305" key="4"/>
<evidence type="ECO:0000305" key="5">
    <source>
    </source>
</evidence>